<dbReference type="EMBL" id="LT708304">
    <property type="protein sequence ID" value="SIT99977.1"/>
    <property type="molecule type" value="Genomic_DNA"/>
</dbReference>
<dbReference type="RefSeq" id="NP_855028.1">
    <property type="nucleotide sequence ID" value="NC_002945.3"/>
</dbReference>
<dbReference type="SMR" id="P66874"/>
<dbReference type="KEGG" id="mbo:BQ2027_MB1374"/>
<dbReference type="PATRIC" id="fig|233413.5.peg.1506"/>
<dbReference type="Proteomes" id="UP000001419">
    <property type="component" value="Chromosome"/>
</dbReference>
<dbReference type="GO" id="GO:0042781">
    <property type="term" value="F:3'-tRNA processing endoribonuclease activity"/>
    <property type="evidence" value="ECO:0007669"/>
    <property type="project" value="TreeGrafter"/>
</dbReference>
<dbReference type="CDD" id="cd07716">
    <property type="entry name" value="RNaseZ_short-form-like_MBL-fold"/>
    <property type="match status" value="1"/>
</dbReference>
<dbReference type="FunFam" id="3.60.15.10:FF:000087">
    <property type="entry name" value="MBL fold metallo-hydrolase"/>
    <property type="match status" value="1"/>
</dbReference>
<dbReference type="Gene3D" id="3.60.15.10">
    <property type="entry name" value="Ribonuclease Z/Hydroxyacylglutathione hydrolase-like"/>
    <property type="match status" value="1"/>
</dbReference>
<dbReference type="InterPro" id="IPR054857">
    <property type="entry name" value="cyc_nuc_deg_phdiest"/>
</dbReference>
<dbReference type="InterPro" id="IPR001279">
    <property type="entry name" value="Metallo-B-lactamas"/>
</dbReference>
<dbReference type="InterPro" id="IPR036866">
    <property type="entry name" value="RibonucZ/Hydroxyglut_hydro"/>
</dbReference>
<dbReference type="NCBIfam" id="NF041851">
    <property type="entry name" value="cyc_nuc_deg_phdiest"/>
    <property type="match status" value="1"/>
</dbReference>
<dbReference type="PANTHER" id="PTHR46018:SF4">
    <property type="entry name" value="METALLO-HYDROLASE YHFI-RELATED"/>
    <property type="match status" value="1"/>
</dbReference>
<dbReference type="PANTHER" id="PTHR46018">
    <property type="entry name" value="ZINC PHOSPHODIESTERASE ELAC PROTEIN 1"/>
    <property type="match status" value="1"/>
</dbReference>
<dbReference type="Pfam" id="PF12706">
    <property type="entry name" value="Lactamase_B_2"/>
    <property type="match status" value="1"/>
</dbReference>
<dbReference type="SUPFAM" id="SSF56281">
    <property type="entry name" value="Metallo-hydrolase/oxidoreductase"/>
    <property type="match status" value="1"/>
</dbReference>
<name>Y1374_MYCBO</name>
<sequence>MRRCIPHRCIGHGTVVSVRITVLGCSGSVVGPDSPASGYLLRAPHTPPLVIDFGGGVLGALQRHADPASVHVLLSHLHADHCLDLPGLFVWRRYHPSRPSGKALLYGPSDTWSRLGAASSPYGGEIDDCSDIFDVHHWADSEPVTLGALTIVPRLVAHPTESFGLRITDPSGASLAYSGDTGICDQLVELARGVDVFLCEASWTHSPKHPPDLHLSGTEAGMVAAQAGVRELLLTHIPPWTSREDVISEAKAEFDGPVHAVVCDETFEVRRAG</sequence>
<reference key="1">
    <citation type="journal article" date="2003" name="Proc. Natl. Acad. Sci. U.S.A.">
        <title>The complete genome sequence of Mycobacterium bovis.</title>
        <authorList>
            <person name="Garnier T."/>
            <person name="Eiglmeier K."/>
            <person name="Camus J.-C."/>
            <person name="Medina N."/>
            <person name="Mansoor H."/>
            <person name="Pryor M."/>
            <person name="Duthoy S."/>
            <person name="Grondin S."/>
            <person name="Lacroix C."/>
            <person name="Monsempe C."/>
            <person name="Simon S."/>
            <person name="Harris B."/>
            <person name="Atkin R."/>
            <person name="Doggett J."/>
            <person name="Mayes R."/>
            <person name="Keating L."/>
            <person name="Wheeler P.R."/>
            <person name="Parkhill J."/>
            <person name="Barrell B.G."/>
            <person name="Cole S.T."/>
            <person name="Gordon S.V."/>
            <person name="Hewinson R.G."/>
        </authorList>
    </citation>
    <scope>NUCLEOTIDE SEQUENCE [LARGE SCALE GENOMIC DNA]</scope>
    <source>
        <strain>ATCC BAA-935 / AF2122/97</strain>
    </source>
</reference>
<reference key="2">
    <citation type="journal article" date="2017" name="Genome Announc.">
        <title>Updated reference genome sequence and annotation of Mycobacterium bovis AF2122/97.</title>
        <authorList>
            <person name="Malone K.M."/>
            <person name="Farrell D."/>
            <person name="Stuber T.P."/>
            <person name="Schubert O.T."/>
            <person name="Aebersold R."/>
            <person name="Robbe-Austerman S."/>
            <person name="Gordon S.V."/>
        </authorList>
    </citation>
    <scope>NUCLEOTIDE SEQUENCE [LARGE SCALE GENOMIC DNA]</scope>
    <scope>GENOME REANNOTATION</scope>
    <source>
        <strain>ATCC BAA-935 / AF2122/97</strain>
    </source>
</reference>
<gene>
    <name type="ordered locus">BQ2027_MB1374</name>
</gene>
<accession>P66874</accession>
<accession>A0A1R3XY26</accession>
<accession>Q10648</accession>
<accession>X2BHN1</accession>
<protein>
    <recommendedName>
        <fullName>Uncharacterized protein Mb1374</fullName>
    </recommendedName>
</protein>
<proteinExistence type="inferred from homology"/>
<evidence type="ECO:0000305" key="1"/>
<keyword id="KW-1185">Reference proteome</keyword>
<organism>
    <name type="scientific">Mycobacterium bovis (strain ATCC BAA-935 / AF2122/97)</name>
    <dbReference type="NCBI Taxonomy" id="233413"/>
    <lineage>
        <taxon>Bacteria</taxon>
        <taxon>Bacillati</taxon>
        <taxon>Actinomycetota</taxon>
        <taxon>Actinomycetes</taxon>
        <taxon>Mycobacteriales</taxon>
        <taxon>Mycobacteriaceae</taxon>
        <taxon>Mycobacterium</taxon>
        <taxon>Mycobacterium tuberculosis complex</taxon>
    </lineage>
</organism>
<comment type="similarity">
    <text evidence="1">Belongs to the AtsA family.</text>
</comment>
<feature type="chain" id="PRO_0000192689" description="Uncharacterized protein Mb1374">
    <location>
        <begin position="1"/>
        <end position="273"/>
    </location>
</feature>